<organism>
    <name type="scientific">Aedes aegypti</name>
    <name type="common">Yellowfever mosquito</name>
    <name type="synonym">Culex aegypti</name>
    <dbReference type="NCBI Taxonomy" id="7159"/>
    <lineage>
        <taxon>Eukaryota</taxon>
        <taxon>Metazoa</taxon>
        <taxon>Ecdysozoa</taxon>
        <taxon>Arthropoda</taxon>
        <taxon>Hexapoda</taxon>
        <taxon>Insecta</taxon>
        <taxon>Pterygota</taxon>
        <taxon>Neoptera</taxon>
        <taxon>Endopterygota</taxon>
        <taxon>Diptera</taxon>
        <taxon>Nematocera</taxon>
        <taxon>Culicoidea</taxon>
        <taxon>Culicidae</taxon>
        <taxon>Culicinae</taxon>
        <taxon>Aedini</taxon>
        <taxon>Aedes</taxon>
        <taxon>Stegomyia</taxon>
    </lineage>
</organism>
<dbReference type="EMBL" id="AF396870">
    <property type="protein sequence ID" value="AAK85383.1"/>
    <property type="molecule type" value="mRNA"/>
</dbReference>
<dbReference type="EMBL" id="AF396871">
    <property type="protein sequence ID" value="AAK85384.1"/>
    <property type="molecule type" value="mRNA"/>
</dbReference>
<dbReference type="EMBL" id="AY064120">
    <property type="protein sequence ID" value="AAL85621.2"/>
    <property type="molecule type" value="mRNA"/>
</dbReference>
<dbReference type="EMBL" id="AY133346">
    <property type="protein sequence ID" value="AAN11326.1"/>
    <property type="molecule type" value="mRNA"/>
</dbReference>
<dbReference type="EMBL" id="CH477314">
    <property type="protein sequence ID" value="EAT43827.1"/>
    <property type="status" value="ALT_SEQ"/>
    <property type="molecule type" value="Genomic_DNA"/>
</dbReference>
<dbReference type="RefSeq" id="XP_001649725.1">
    <molecule id="Q95P51-1"/>
    <property type="nucleotide sequence ID" value="XM_001649675.2"/>
</dbReference>
<dbReference type="SMR" id="Q95P51"/>
<dbReference type="FunCoup" id="Q95P51">
    <property type="interactions" value="949"/>
</dbReference>
<dbReference type="STRING" id="7159.Q95P51"/>
<dbReference type="PaxDb" id="7159-AAEL004783-PA"/>
<dbReference type="EnsemblMetazoa" id="AAEL004783-RA">
    <molecule id="Q95P51-1"/>
    <property type="protein sequence ID" value="AAEL004783-PA"/>
    <property type="gene ID" value="AAEL004783"/>
</dbReference>
<dbReference type="GeneID" id="5565400"/>
<dbReference type="KEGG" id="aag:5565400"/>
<dbReference type="VEuPathDB" id="VectorBase:AAEL004783"/>
<dbReference type="eggNOG" id="KOG4387">
    <property type="taxonomic scope" value="Eukaryota"/>
</dbReference>
<dbReference type="HOGENOM" id="CLU_1058742_0_0_1"/>
<dbReference type="InParanoid" id="Q95P51"/>
<dbReference type="OrthoDB" id="5959761at2759"/>
<dbReference type="Proteomes" id="UP000008820">
    <property type="component" value="Chromosome 2"/>
</dbReference>
<dbReference type="Proteomes" id="UP000682892">
    <property type="component" value="Unassembled WGS sequence"/>
</dbReference>
<dbReference type="GO" id="GO:0005737">
    <property type="term" value="C:cytoplasm"/>
    <property type="evidence" value="ECO:0007669"/>
    <property type="project" value="TreeGrafter"/>
</dbReference>
<dbReference type="GO" id="GO:0005634">
    <property type="term" value="C:nucleus"/>
    <property type="evidence" value="ECO:0007669"/>
    <property type="project" value="TreeGrafter"/>
</dbReference>
<dbReference type="GO" id="GO:0008073">
    <property type="term" value="F:ornithine decarboxylase inhibitor activity"/>
    <property type="evidence" value="ECO:0007669"/>
    <property type="project" value="InterPro"/>
</dbReference>
<dbReference type="GO" id="GO:0045732">
    <property type="term" value="P:positive regulation of protein catabolic process"/>
    <property type="evidence" value="ECO:0007669"/>
    <property type="project" value="TreeGrafter"/>
</dbReference>
<dbReference type="GO" id="GO:0075523">
    <property type="term" value="P:viral translational frameshifting"/>
    <property type="evidence" value="ECO:0007669"/>
    <property type="project" value="UniProtKB-KW"/>
</dbReference>
<dbReference type="Gene3D" id="3.40.630.60">
    <property type="match status" value="1"/>
</dbReference>
<dbReference type="InterPro" id="IPR016181">
    <property type="entry name" value="Acyl_CoA_acyltransferase"/>
</dbReference>
<dbReference type="InterPro" id="IPR002993">
    <property type="entry name" value="ODC_AZ"/>
</dbReference>
<dbReference type="InterPro" id="IPR038581">
    <property type="entry name" value="ODC_AZ_sf"/>
</dbReference>
<dbReference type="PANTHER" id="PTHR10279">
    <property type="entry name" value="ORNITHINE DECARBOXYLASE ANTIZYME"/>
    <property type="match status" value="1"/>
</dbReference>
<dbReference type="PANTHER" id="PTHR10279:SF10">
    <property type="entry name" value="ORNITHINE DECARBOXYLASE ANTIZYME"/>
    <property type="match status" value="1"/>
</dbReference>
<dbReference type="Pfam" id="PF02100">
    <property type="entry name" value="ODC_AZ"/>
    <property type="match status" value="1"/>
</dbReference>
<dbReference type="SUPFAM" id="SSF55729">
    <property type="entry name" value="Acyl-CoA N-acyltransferases (Nat)"/>
    <property type="match status" value="1"/>
</dbReference>
<dbReference type="PROSITE" id="PS01337">
    <property type="entry name" value="ODC_AZ"/>
    <property type="match status" value="1"/>
</dbReference>
<accession>Q95P51</accession>
<accession>Q17BZ2</accession>
<accession>Q8T4Q6</accession>
<accession>Q95P52</accession>
<reference key="1">
    <citation type="journal article" date="2003" name="Mol. Genet. Genomics">
        <title>A targeted approach to the identification of candidate genes determining susceptibility to Plasmodium gallinaceum in Aedes aegypti.</title>
        <authorList>
            <person name="Morlais I."/>
            <person name="Mori A."/>
            <person name="Schneider J.R."/>
            <person name="Severson D.W."/>
        </authorList>
    </citation>
    <scope>NUCLEOTIDE SEQUENCE [MRNA]</scope>
    <scope>TISSUE SPECIFICITY</scope>
    <source>
        <strain>Moyo-R</strain>
        <strain>Red eye</strain>
        <tissue>Midgut</tissue>
    </source>
</reference>
<reference key="2">
    <citation type="submission" date="2001-11" db="EMBL/GenBank/DDBJ databases">
        <title>Single nucleotide polymorphism and codon usage bias in Aedes aegypti.</title>
        <authorList>
            <person name="Morlais I."/>
            <person name="Severson D.W."/>
        </authorList>
    </citation>
    <scope>NUCLEOTIDE SEQUENCE [MRNA]</scope>
    <source>
        <strain>Moyo-R</strain>
    </source>
</reference>
<reference key="3">
    <citation type="journal article" date="2007" name="Science">
        <title>Genome sequence of Aedes aegypti, a major arbovirus vector.</title>
        <authorList>
            <person name="Nene V."/>
            <person name="Wortman J.R."/>
            <person name="Lawson D."/>
            <person name="Haas B.J."/>
            <person name="Kodira C.D."/>
            <person name="Tu Z.J."/>
            <person name="Loftus B.J."/>
            <person name="Xi Z."/>
            <person name="Megy K."/>
            <person name="Grabherr M."/>
            <person name="Ren Q."/>
            <person name="Zdobnov E.M."/>
            <person name="Lobo N.F."/>
            <person name="Campbell K.S."/>
            <person name="Brown S.E."/>
            <person name="Bonaldo M.F."/>
            <person name="Zhu J."/>
            <person name="Sinkins S.P."/>
            <person name="Hogenkamp D.G."/>
            <person name="Amedeo P."/>
            <person name="Arensburger P."/>
            <person name="Atkinson P.W."/>
            <person name="Bidwell S.L."/>
            <person name="Biedler J."/>
            <person name="Birney E."/>
            <person name="Bruggner R.V."/>
            <person name="Costas J."/>
            <person name="Coy M.R."/>
            <person name="Crabtree J."/>
            <person name="Crawford M."/>
            <person name="DeBruyn B."/>
            <person name="DeCaprio D."/>
            <person name="Eiglmeier K."/>
            <person name="Eisenstadt E."/>
            <person name="El-Dorry H."/>
            <person name="Gelbart W.M."/>
            <person name="Gomes S.L."/>
            <person name="Hammond M."/>
            <person name="Hannick L.I."/>
            <person name="Hogan J.R."/>
            <person name="Holmes M.H."/>
            <person name="Jaffe D."/>
            <person name="Johnston S.J."/>
            <person name="Kennedy R.C."/>
            <person name="Koo H."/>
            <person name="Kravitz S."/>
            <person name="Kriventseva E.V."/>
            <person name="Kulp D."/>
            <person name="Labutti K."/>
            <person name="Lee E."/>
            <person name="Li S."/>
            <person name="Lovin D.D."/>
            <person name="Mao C."/>
            <person name="Mauceli E."/>
            <person name="Menck C.F."/>
            <person name="Miller J.R."/>
            <person name="Montgomery P."/>
            <person name="Mori A."/>
            <person name="Nascimento A.L."/>
            <person name="Naveira H.F."/>
            <person name="Nusbaum C."/>
            <person name="O'Leary S.B."/>
            <person name="Orvis J."/>
            <person name="Pertea M."/>
            <person name="Quesneville H."/>
            <person name="Reidenbach K.R."/>
            <person name="Rogers Y.-H.C."/>
            <person name="Roth C.W."/>
            <person name="Schneider J.R."/>
            <person name="Schatz M."/>
            <person name="Shumway M."/>
            <person name="Stanke M."/>
            <person name="Stinson E.O."/>
            <person name="Tubio J.M.C."/>
            <person name="Vanzee J.P."/>
            <person name="Verjovski-Almeida S."/>
            <person name="Werner D."/>
            <person name="White O.R."/>
            <person name="Wyder S."/>
            <person name="Zeng Q."/>
            <person name="Zhao Q."/>
            <person name="Zhao Y."/>
            <person name="Hill C.A."/>
            <person name="Raikhel A.S."/>
            <person name="Soares M.B."/>
            <person name="Knudson D.L."/>
            <person name="Lee N.H."/>
            <person name="Galagan J."/>
            <person name="Salzberg S.L."/>
            <person name="Paulsen I.T."/>
            <person name="Dimopoulos G."/>
            <person name="Collins F.H."/>
            <person name="Bruce B."/>
            <person name="Fraser-Liggett C.M."/>
            <person name="Severson D.W."/>
        </authorList>
    </citation>
    <scope>NUCLEOTIDE SEQUENCE [LARGE SCALE GENOMIC DNA]</scope>
    <source>
        <strain>LVPib12</strain>
    </source>
</reference>
<gene>
    <name type="primary">Oda</name>
    <name type="ORF">AAEL004783</name>
</gene>
<proteinExistence type="evidence at transcript level"/>
<name>OAZ_AEDAE</name>
<comment type="function">
    <text evidence="1">Ornithine decarboxylase (ODC) antizyme protein that negatively regulates ODC activity and intracellular polyamine biosynthesis and uptake in response to increased intracellular polyamine levels. Binds to ODC monomers, inhibiting the assembly of the functional ODC homodimer, and targets the monomers for ubiquitin-independent proteolytic destruction by the 26S proteasome.</text>
</comment>
<comment type="subunit">
    <text evidence="1">Interacts with ODC1 and thereby sterically blocks ODC homodimerization.</text>
</comment>
<comment type="alternative products">
    <event type="ribosomal frameshifting"/>
    <isoform>
        <id>Q95P51-1</id>
        <name>1</name>
        <sequence type="displayed"/>
    </isoform>
    <text>A ribosomal frameshift occurs between the codons for Ser-61 and Asp-62. An autoregulatory mechanism enables modulation of frameshifting according to the cellular concentration of polyamines.</text>
</comment>
<comment type="tissue specificity">
    <text evidence="3">Preferentially expressed in adult female midguts.</text>
</comment>
<comment type="similarity">
    <text evidence="4">Belongs to the ODC antizyme family.</text>
</comment>
<comment type="sequence caution" evidence="4">
    <conflict type="erroneous gene model prediction">
        <sequence resource="EMBL-CDS" id="EAT43827"/>
    </conflict>
</comment>
<protein>
    <recommendedName>
        <fullName>Ornithine decarboxylase antizyme</fullName>
        <shortName>ODC-Az</shortName>
    </recommendedName>
</protein>
<feature type="chain" id="PRO_0000311434" description="Ornithine decarboxylase antizyme">
    <location>
        <begin position="1"/>
        <end position="240"/>
    </location>
</feature>
<feature type="region of interest" description="Disordered" evidence="2">
    <location>
        <begin position="18"/>
        <end position="45"/>
    </location>
</feature>
<feature type="region of interest" description="Disordered" evidence="2">
    <location>
        <begin position="69"/>
        <end position="95"/>
    </location>
</feature>
<feature type="compositionally biased region" description="Polar residues" evidence="2">
    <location>
        <begin position="21"/>
        <end position="33"/>
    </location>
</feature>
<feature type="compositionally biased region" description="Low complexity" evidence="2">
    <location>
        <begin position="34"/>
        <end position="43"/>
    </location>
</feature>
<feature type="compositionally biased region" description="Basic and acidic residues" evidence="2">
    <location>
        <begin position="69"/>
        <end position="84"/>
    </location>
</feature>
<feature type="compositionally biased region" description="Polar residues" evidence="2">
    <location>
        <begin position="85"/>
        <end position="95"/>
    </location>
</feature>
<feature type="sequence conflict" description="In Ref. 2; AAL85621." evidence="4" ref="2">
    <original>L</original>
    <variation>Q</variation>
    <location>
        <position position="15"/>
    </location>
</feature>
<feature type="sequence conflict" description="In Ref. 2; AAL85621." evidence="4" ref="2">
    <original>R</original>
    <variation>W</variation>
    <location>
        <position position="18"/>
    </location>
</feature>
<feature type="sequence conflict" description="In Ref. 1; AAK85383." evidence="4" ref="1">
    <original>L</original>
    <variation>P</variation>
    <location>
        <position position="157"/>
    </location>
</feature>
<evidence type="ECO:0000250" key="1">
    <source>
        <dbReference type="UniProtKB" id="P54368"/>
    </source>
</evidence>
<evidence type="ECO:0000256" key="2">
    <source>
        <dbReference type="SAM" id="MobiDB-lite"/>
    </source>
</evidence>
<evidence type="ECO:0000269" key="3">
    <source>
    </source>
</evidence>
<evidence type="ECO:0000305" key="4"/>
<sequence length="240" mass="27170">MMKFVASEISSIMELQMRSEPISSSNRATKRTISSSSSSSSSSAGFDSYCVSLAVGPLWWSDVPQSRTDHDRASPLKEYNRKTSIDSTTTASSEFTDYDDTESTVEFMNQHEAAVIQEVLNQPTPTQISLKLFVTPQKYSVWETVFNPLDNILYVNLPSTMTHEASKHSFISLLEFAEEKLECDAVVLCIRKDRLDRPNLVRTFSFVGFQPVSPKSPLAPPHIEEQQKNDYLFMIYNIEE</sequence>
<keyword id="KW-1185">Reference proteome</keyword>
<keyword id="KW-0688">Ribosomal frameshifting</keyword>